<comment type="function">
    <text evidence="1">Required for normal meiosis.</text>
</comment>
<comment type="subcellular location">
    <subcellularLocation>
        <location evidence="1">Chromosome</location>
    </subcellularLocation>
    <subcellularLocation>
        <location evidence="1">Nucleus</location>
    </subcellularLocation>
</comment>
<comment type="sequence caution" evidence="5">
    <conflict type="erroneous gene model prediction">
        <sequence resource="EMBL-CDS" id="CAA16970"/>
    </conflict>
</comment>
<comment type="sequence caution" evidence="5">
    <conflict type="erroneous gene model prediction">
        <sequence resource="EMBL-CDS" id="CAB79938"/>
    </conflict>
</comment>
<evidence type="ECO:0000250" key="1">
    <source>
        <dbReference type="UniProtKB" id="F4HRV8"/>
    </source>
</evidence>
<evidence type="ECO:0000255" key="2"/>
<evidence type="ECO:0000255" key="3">
    <source>
        <dbReference type="PROSITE-ProRule" id="PRU00109"/>
    </source>
</evidence>
<evidence type="ECO:0000256" key="4">
    <source>
        <dbReference type="SAM" id="MobiDB-lite"/>
    </source>
</evidence>
<evidence type="ECO:0000305" key="5"/>
<evidence type="ECO:0000312" key="6">
    <source>
        <dbReference type="Araport" id="AT4G32200"/>
    </source>
</evidence>
<evidence type="ECO:0000312" key="7">
    <source>
        <dbReference type="EMBL" id="CAA16970.1"/>
    </source>
</evidence>
<reference key="1">
    <citation type="journal article" date="1999" name="Nature">
        <title>Sequence and analysis of chromosome 4 of the plant Arabidopsis thaliana.</title>
        <authorList>
            <person name="Mayer K.F.X."/>
            <person name="Schueller C."/>
            <person name="Wambutt R."/>
            <person name="Murphy G."/>
            <person name="Volckaert G."/>
            <person name="Pohl T."/>
            <person name="Duesterhoeft A."/>
            <person name="Stiekema W."/>
            <person name="Entian K.-D."/>
            <person name="Terryn N."/>
            <person name="Harris B."/>
            <person name="Ansorge W."/>
            <person name="Brandt P."/>
            <person name="Grivell L.A."/>
            <person name="Rieger M."/>
            <person name="Weichselgartner M."/>
            <person name="de Simone V."/>
            <person name="Obermaier B."/>
            <person name="Mache R."/>
            <person name="Mueller M."/>
            <person name="Kreis M."/>
            <person name="Delseny M."/>
            <person name="Puigdomenech P."/>
            <person name="Watson M."/>
            <person name="Schmidtheini T."/>
            <person name="Reichert B."/>
            <person name="Portetelle D."/>
            <person name="Perez-Alonso M."/>
            <person name="Boutry M."/>
            <person name="Bancroft I."/>
            <person name="Vos P."/>
            <person name="Hoheisel J."/>
            <person name="Zimmermann W."/>
            <person name="Wedler H."/>
            <person name="Ridley P."/>
            <person name="Langham S.-A."/>
            <person name="McCullagh B."/>
            <person name="Bilham L."/>
            <person name="Robben J."/>
            <person name="van der Schueren J."/>
            <person name="Grymonprez B."/>
            <person name="Chuang Y.-J."/>
            <person name="Vandenbussche F."/>
            <person name="Braeken M."/>
            <person name="Weltjens I."/>
            <person name="Voet M."/>
            <person name="Bastiaens I."/>
            <person name="Aert R."/>
            <person name="Defoor E."/>
            <person name="Weitzenegger T."/>
            <person name="Bothe G."/>
            <person name="Ramsperger U."/>
            <person name="Hilbert H."/>
            <person name="Braun M."/>
            <person name="Holzer E."/>
            <person name="Brandt A."/>
            <person name="Peters S."/>
            <person name="van Staveren M."/>
            <person name="Dirkse W."/>
            <person name="Mooijman P."/>
            <person name="Klein Lankhorst R."/>
            <person name="Rose M."/>
            <person name="Hauf J."/>
            <person name="Koetter P."/>
            <person name="Berneiser S."/>
            <person name="Hempel S."/>
            <person name="Feldpausch M."/>
            <person name="Lamberth S."/>
            <person name="Van den Daele H."/>
            <person name="De Keyser A."/>
            <person name="Buysshaert C."/>
            <person name="Gielen J."/>
            <person name="Villarroel R."/>
            <person name="De Clercq R."/>
            <person name="van Montagu M."/>
            <person name="Rogers J."/>
            <person name="Cronin A."/>
            <person name="Quail M.A."/>
            <person name="Bray-Allen S."/>
            <person name="Clark L."/>
            <person name="Doggett J."/>
            <person name="Hall S."/>
            <person name="Kay M."/>
            <person name="Lennard N."/>
            <person name="McLay K."/>
            <person name="Mayes R."/>
            <person name="Pettett A."/>
            <person name="Rajandream M.A."/>
            <person name="Lyne M."/>
            <person name="Benes V."/>
            <person name="Rechmann S."/>
            <person name="Borkova D."/>
            <person name="Bloecker H."/>
            <person name="Scharfe M."/>
            <person name="Grimm M."/>
            <person name="Loehnert T.-H."/>
            <person name="Dose S."/>
            <person name="de Haan M."/>
            <person name="Maarse A.C."/>
            <person name="Schaefer M."/>
            <person name="Mueller-Auer S."/>
            <person name="Gabel C."/>
            <person name="Fuchs M."/>
            <person name="Fartmann B."/>
            <person name="Granderath K."/>
            <person name="Dauner D."/>
            <person name="Herzl A."/>
            <person name="Neumann S."/>
            <person name="Argiriou A."/>
            <person name="Vitale D."/>
            <person name="Liguori R."/>
            <person name="Piravandi E."/>
            <person name="Massenet O."/>
            <person name="Quigley F."/>
            <person name="Clabauld G."/>
            <person name="Muendlein A."/>
            <person name="Felber R."/>
            <person name="Schnabl S."/>
            <person name="Hiller R."/>
            <person name="Schmidt W."/>
            <person name="Lecharny A."/>
            <person name="Aubourg S."/>
            <person name="Chefdor F."/>
            <person name="Cooke R."/>
            <person name="Berger C."/>
            <person name="Monfort A."/>
            <person name="Casacuberta E."/>
            <person name="Gibbons T."/>
            <person name="Weber N."/>
            <person name="Vandenbol M."/>
            <person name="Bargues M."/>
            <person name="Terol J."/>
            <person name="Torres A."/>
            <person name="Perez-Perez A."/>
            <person name="Purnelle B."/>
            <person name="Bent E."/>
            <person name="Johnson S."/>
            <person name="Tacon D."/>
            <person name="Jesse T."/>
            <person name="Heijnen L."/>
            <person name="Schwarz S."/>
            <person name="Scholler P."/>
            <person name="Heber S."/>
            <person name="Francs P."/>
            <person name="Bielke C."/>
            <person name="Frishman D."/>
            <person name="Haase D."/>
            <person name="Lemcke K."/>
            <person name="Mewes H.-W."/>
            <person name="Stocker S."/>
            <person name="Zaccaria P."/>
            <person name="Bevan M."/>
            <person name="Wilson R.K."/>
            <person name="de la Bastide M."/>
            <person name="Habermann K."/>
            <person name="Parnell L."/>
            <person name="Dedhia N."/>
            <person name="Gnoj L."/>
            <person name="Schutz K."/>
            <person name="Huang E."/>
            <person name="Spiegel L."/>
            <person name="Sekhon M."/>
            <person name="Murray J."/>
            <person name="Sheet P."/>
            <person name="Cordes M."/>
            <person name="Abu-Threideh J."/>
            <person name="Stoneking T."/>
            <person name="Kalicki J."/>
            <person name="Graves T."/>
            <person name="Harmon G."/>
            <person name="Edwards J."/>
            <person name="Latreille P."/>
            <person name="Courtney L."/>
            <person name="Cloud J."/>
            <person name="Abbott A."/>
            <person name="Scott K."/>
            <person name="Johnson D."/>
            <person name="Minx P."/>
            <person name="Bentley D."/>
            <person name="Fulton B."/>
            <person name="Miller N."/>
            <person name="Greco T."/>
            <person name="Kemp K."/>
            <person name="Kramer J."/>
            <person name="Fulton L."/>
            <person name="Mardis E."/>
            <person name="Dante M."/>
            <person name="Pepin K."/>
            <person name="Hillier L.W."/>
            <person name="Nelson J."/>
            <person name="Spieth J."/>
            <person name="Ryan E."/>
            <person name="Andrews S."/>
            <person name="Geisel C."/>
            <person name="Layman D."/>
            <person name="Du H."/>
            <person name="Ali J."/>
            <person name="Berghoff A."/>
            <person name="Jones K."/>
            <person name="Drone K."/>
            <person name="Cotton M."/>
            <person name="Joshu C."/>
            <person name="Antonoiu B."/>
            <person name="Zidanic M."/>
            <person name="Strong C."/>
            <person name="Sun H."/>
            <person name="Lamar B."/>
            <person name="Yordan C."/>
            <person name="Ma P."/>
            <person name="Zhong J."/>
            <person name="Preston R."/>
            <person name="Vil D."/>
            <person name="Shekher M."/>
            <person name="Matero A."/>
            <person name="Shah R."/>
            <person name="Swaby I.K."/>
            <person name="O'Shaughnessy A."/>
            <person name="Rodriguez M."/>
            <person name="Hoffman J."/>
            <person name="Till S."/>
            <person name="Granat S."/>
            <person name="Shohdy N."/>
            <person name="Hasegawa A."/>
            <person name="Hameed A."/>
            <person name="Lodhi M."/>
            <person name="Johnson A."/>
            <person name="Chen E."/>
            <person name="Marra M.A."/>
            <person name="Martienssen R."/>
            <person name="McCombie W.R."/>
        </authorList>
    </citation>
    <scope>NUCLEOTIDE SEQUENCE [LARGE SCALE GENOMIC DNA]</scope>
    <source>
        <strain>cv. Columbia</strain>
    </source>
</reference>
<reference key="2">
    <citation type="journal article" date="2017" name="Plant J.">
        <title>Araport11: a complete reannotation of the Arabidopsis thaliana reference genome.</title>
        <authorList>
            <person name="Cheng C.Y."/>
            <person name="Krishnakumar V."/>
            <person name="Chan A.P."/>
            <person name="Thibaud-Nissen F."/>
            <person name="Schobel S."/>
            <person name="Town C.D."/>
        </authorList>
    </citation>
    <scope>GENOME REANNOTATION</scope>
    <source>
        <strain>cv. Columbia</strain>
    </source>
</reference>
<reference key="3">
    <citation type="submission" date="2006-07" db="EMBL/GenBank/DDBJ databases">
        <title>Large-scale analysis of RIKEN Arabidopsis full-length (RAFL) cDNAs.</title>
        <authorList>
            <person name="Totoki Y."/>
            <person name="Seki M."/>
            <person name="Ishida J."/>
            <person name="Nakajima M."/>
            <person name="Enju A."/>
            <person name="Kamiya A."/>
            <person name="Narusaka M."/>
            <person name="Shin-i T."/>
            <person name="Nakagawa M."/>
            <person name="Sakamoto N."/>
            <person name="Oishi K."/>
            <person name="Kohara Y."/>
            <person name="Kobayashi M."/>
            <person name="Toyoda A."/>
            <person name="Sakaki Y."/>
            <person name="Sakurai T."/>
            <person name="Iida K."/>
            <person name="Akiyama K."/>
            <person name="Satou M."/>
            <person name="Toyoda T."/>
            <person name="Konagaya A."/>
            <person name="Carninci P."/>
            <person name="Kawai J."/>
            <person name="Hayashizaki Y."/>
            <person name="Shinozaki K."/>
        </authorList>
    </citation>
    <scope>NUCLEOTIDE SEQUENCE [LARGE SCALE MRNA] OF 922-1399</scope>
    <source>
        <strain>cv. Columbia</strain>
    </source>
</reference>
<dbReference type="EMBL" id="AL021811">
    <property type="protein sequence ID" value="CAA16970.1"/>
    <property type="status" value="ALT_SEQ"/>
    <property type="molecule type" value="Genomic_DNA"/>
</dbReference>
<dbReference type="EMBL" id="AL161580">
    <property type="protein sequence ID" value="CAB79938.1"/>
    <property type="status" value="ALT_SEQ"/>
    <property type="molecule type" value="Genomic_DNA"/>
</dbReference>
<dbReference type="EMBL" id="CP002687">
    <property type="protein sequence ID" value="AEE86019.1"/>
    <property type="molecule type" value="Genomic_DNA"/>
</dbReference>
<dbReference type="EMBL" id="AK229474">
    <property type="protein sequence ID" value="BAF01332.1"/>
    <property type="molecule type" value="mRNA"/>
</dbReference>
<dbReference type="PIR" id="T05408">
    <property type="entry name" value="T05408"/>
</dbReference>
<dbReference type="RefSeq" id="NP_194947.2">
    <property type="nucleotide sequence ID" value="NM_119372.3"/>
</dbReference>
<dbReference type="SMR" id="F4JTJ9"/>
<dbReference type="FunCoup" id="F4JTJ9">
    <property type="interactions" value="12"/>
</dbReference>
<dbReference type="STRING" id="3702.F4JTJ9"/>
<dbReference type="iPTMnet" id="F4JTJ9"/>
<dbReference type="PaxDb" id="3702-AT4G32200.1"/>
<dbReference type="ProteomicsDB" id="246526"/>
<dbReference type="EnsemblPlants" id="AT4G32200.1">
    <property type="protein sequence ID" value="AT4G32200.1"/>
    <property type="gene ID" value="AT4G32200"/>
</dbReference>
<dbReference type="GeneID" id="829353"/>
<dbReference type="Gramene" id="AT4G32200.1">
    <property type="protein sequence ID" value="AT4G32200.1"/>
    <property type="gene ID" value="AT4G32200"/>
</dbReference>
<dbReference type="KEGG" id="ath:AT4G32200"/>
<dbReference type="Araport" id="AT4G32200"/>
<dbReference type="TAIR" id="AT4G32200">
    <property type="gene designation" value="ASY2"/>
</dbReference>
<dbReference type="eggNOG" id="KOG4652">
    <property type="taxonomic scope" value="Eukaryota"/>
</dbReference>
<dbReference type="HOGENOM" id="CLU_254442_0_0_1"/>
<dbReference type="InParanoid" id="F4JTJ9"/>
<dbReference type="PRO" id="PR:F4JTJ9"/>
<dbReference type="Proteomes" id="UP000006548">
    <property type="component" value="Chromosome 4"/>
</dbReference>
<dbReference type="ExpressionAtlas" id="F4JTJ9">
    <property type="expression patterns" value="baseline and differential"/>
</dbReference>
<dbReference type="GO" id="GO:0005694">
    <property type="term" value="C:chromosome"/>
    <property type="evidence" value="ECO:0007669"/>
    <property type="project" value="UniProtKB-SubCell"/>
</dbReference>
<dbReference type="GO" id="GO:0005634">
    <property type="term" value="C:nucleus"/>
    <property type="evidence" value="ECO:0007669"/>
    <property type="project" value="UniProtKB-SubCell"/>
</dbReference>
<dbReference type="GO" id="GO:0007130">
    <property type="term" value="P:synaptonemal complex assembly"/>
    <property type="evidence" value="ECO:0000304"/>
    <property type="project" value="TAIR"/>
</dbReference>
<dbReference type="Gene3D" id="3.30.900.10">
    <property type="entry name" value="HORMA domain"/>
    <property type="match status" value="1"/>
</dbReference>
<dbReference type="InterPro" id="IPR003511">
    <property type="entry name" value="HORMA_dom"/>
</dbReference>
<dbReference type="InterPro" id="IPR036570">
    <property type="entry name" value="HORMA_dom_sf"/>
</dbReference>
<dbReference type="InterPro" id="IPR051294">
    <property type="entry name" value="HORMA_MeioticProgression"/>
</dbReference>
<dbReference type="PANTHER" id="PTHR48225">
    <property type="entry name" value="HORMA DOMAIN-CONTAINING PROTEIN 1"/>
    <property type="match status" value="1"/>
</dbReference>
<dbReference type="PANTHER" id="PTHR48225:SF7">
    <property type="entry name" value="MEIOSIS-SPECIFIC PROTEIN HOP1"/>
    <property type="match status" value="1"/>
</dbReference>
<dbReference type="Pfam" id="PF02301">
    <property type="entry name" value="HORMA"/>
    <property type="match status" value="1"/>
</dbReference>
<dbReference type="SUPFAM" id="SSF56019">
    <property type="entry name" value="The spindle assembly checkpoint protein mad2"/>
    <property type="match status" value="1"/>
</dbReference>
<dbReference type="PROSITE" id="PS50815">
    <property type="entry name" value="HORMA"/>
    <property type="match status" value="1"/>
</dbReference>
<keyword id="KW-0158">Chromosome</keyword>
<keyword id="KW-0175">Coiled coil</keyword>
<keyword id="KW-0469">Meiosis</keyword>
<keyword id="KW-0539">Nucleus</keyword>
<keyword id="KW-1185">Reference proteome</keyword>
<sequence>MVVVSKNNEQQSLILTTELLRTAIFNISYIRGLFPVRYFKDMSVPALDLKMKKLMPMDAESRRLIGWMEKGVYDALHKKHLKKLIFYICETVDGPLIEEYIFSFSYSDSDSQDVRMNINITGINTYGGTLNSTADNSTADMTLNQMSSVDEDFGQNARRSNAFVTYQRFSVYISFHIANYRLCYFFASVQRTILMKLLYYEYVPPDYQPPFFRGCSEEEEAQYVWPKIPLRMEIGNVNSQHHVLTVKVKSVLDPYDPCEDENDNMQDDERSKGPDSLHDDQPCKVFTKPSKLILTENKDADHGEVNEEKLLLITPICEILQDVKQDQVEHQLAKVKDTKGRPASIVQNPILQSHEYDIRRLKARLQRLERHISVPDSPQEGIRKWFAAVSSQLFYKVMEACTRRKPILGDAILSSTVKVQNFNAKICSKLLKKPASIYRKKHFTLNSASLRISGLAGSIFAWAVGFCLFSAQIGHVFVQPKTRSSESKPKVTMEELEEKLTPPSSEPKSAPPSSEPKSAPPSSEPLEKLAVIRRILPEIFAQRCGQRNSSFEAFAQRRTTYDYYNIRLNPREIIFRRLQEESKVALALSSANYFVLSILYRFFRQWSEVSLVRRNSRLTGNPSNEAQSSRSNRIEIPTLLDEPDREGSGGHLAAPEDPVDFLAQFDPLIDLEDAYNTQPQYTEAEVNARLLHEDHVEFDLVPVVSWNTEITAKKTLSTTESVAEVFALCGSGDRPLTCMIPGENERPWNPPRGYVCMYEAYFRQCHLWFPIPSLIISFLNRRHMAFSQLTPAAICNFVAALTFGAEEGYLVNVRCFEEMTTLKAIRSPGYWVVNNRPKHNFLPGPKVSNFKNWEEYYFYVRVDLESYERPFSGRKRMWTEFPDRYRPSPDFPVEFEGVLEAIFRARRRTWKDVTRSRVNRIMGKVRKSFISFAAGLLNMPPPPAPIEEERQPLDGEAAASNPPVSAGPSGVDQVSHEMVNPESQDRMCLEGADVVPAQEIAECDRSQSVQVVEPEVQNITDDRSVVVYAAPPAGEEVNTGLTILDQDKDETVAEPGISRRSREEKGKGGANQSKKRSASEAGLDEAAAPKTFRLSRGETLNSDQFTFKYSGEKFLVRDQEAASHLWRNLMLPGTKDFPNPDDLVLKEGYQKFARSSLETAALANDLIATYDRKLKLKLADREAFDNLKKCADQAKAIYAKDMKEMASLRDAAEIHKAEMSSLNDEVKRLNSREADLQKEFSDLQVALVAVKEHGERECNRLRNDRAAKVARTTKKAQARLDRVKAYLKEQEDLVGPKVDAENQARGAEEIVGILMQRGAKIAASELSGLKELTKRATDEVNALNVIELGDDDLNMSPDQLGFSRQISQVAPVADQHGSNVDLLAEVIRRVSVEETNQTT</sequence>
<name>ASY2_ARATH</name>
<organism>
    <name type="scientific">Arabidopsis thaliana</name>
    <name type="common">Mouse-ear cress</name>
    <dbReference type="NCBI Taxonomy" id="3702"/>
    <lineage>
        <taxon>Eukaryota</taxon>
        <taxon>Viridiplantae</taxon>
        <taxon>Streptophyta</taxon>
        <taxon>Embryophyta</taxon>
        <taxon>Tracheophyta</taxon>
        <taxon>Spermatophyta</taxon>
        <taxon>Magnoliopsida</taxon>
        <taxon>eudicotyledons</taxon>
        <taxon>Gunneridae</taxon>
        <taxon>Pentapetalae</taxon>
        <taxon>rosids</taxon>
        <taxon>malvids</taxon>
        <taxon>Brassicales</taxon>
        <taxon>Brassicaceae</taxon>
        <taxon>Camelineae</taxon>
        <taxon>Arabidopsis</taxon>
    </lineage>
</organism>
<protein>
    <recommendedName>
        <fullName evidence="5">Meiosis-specific protein ASY2</fullName>
    </recommendedName>
    <alternativeName>
        <fullName evidence="5">Protein ASYNAPTIC 2</fullName>
    </alternativeName>
</protein>
<feature type="chain" id="PRO_0000438697" description="Meiosis-specific protein ASY2">
    <location>
        <begin position="1"/>
        <end position="1399"/>
    </location>
</feature>
<feature type="domain" description="HORMA" evidence="3">
    <location>
        <begin position="10"/>
        <end position="248"/>
    </location>
</feature>
<feature type="region of interest" description="Disordered" evidence="4">
    <location>
        <begin position="257"/>
        <end position="281"/>
    </location>
</feature>
<feature type="region of interest" description="Disordered" evidence="4">
    <location>
        <begin position="487"/>
        <end position="525"/>
    </location>
</feature>
<feature type="region of interest" description="Disordered" evidence="4">
    <location>
        <begin position="617"/>
        <end position="656"/>
    </location>
</feature>
<feature type="region of interest" description="Disordered" evidence="4">
    <location>
        <begin position="940"/>
        <end position="974"/>
    </location>
</feature>
<feature type="region of interest" description="Disordered" evidence="4">
    <location>
        <begin position="1045"/>
        <end position="1090"/>
    </location>
</feature>
<feature type="coiled-coil region" evidence="2">
    <location>
        <begin position="1205"/>
        <end position="1246"/>
    </location>
</feature>
<feature type="compositionally biased region" description="Acidic residues" evidence="4">
    <location>
        <begin position="257"/>
        <end position="266"/>
    </location>
</feature>
<feature type="compositionally biased region" description="Basic and acidic residues" evidence="4">
    <location>
        <begin position="267"/>
        <end position="281"/>
    </location>
</feature>
<feature type="compositionally biased region" description="Pro residues" evidence="4">
    <location>
        <begin position="509"/>
        <end position="523"/>
    </location>
</feature>
<feature type="compositionally biased region" description="Polar residues" evidence="4">
    <location>
        <begin position="617"/>
        <end position="631"/>
    </location>
</feature>
<gene>
    <name evidence="5" type="primary">ASY2</name>
    <name evidence="6" type="ordered locus">At4g32200</name>
    <name evidence="7" type="ORF">F10M6.160</name>
</gene>
<proteinExistence type="evidence at transcript level"/>
<accession>F4JTJ9</accession>
<accession>O49370</accession>
<accession>Q0WNG7</accession>